<accession>O14049</accession>
<gene>
    <name type="primary">rps801</name>
    <name type="synonym">rps8</name>
    <name type="synonym">rps8a</name>
    <name type="ORF">SPAC2C4.16c</name>
</gene>
<reference key="1">
    <citation type="journal article" date="2002" name="Nature">
        <title>The genome sequence of Schizosaccharomyces pombe.</title>
        <authorList>
            <person name="Wood V."/>
            <person name="Gwilliam R."/>
            <person name="Rajandream M.A."/>
            <person name="Lyne M.H."/>
            <person name="Lyne R."/>
            <person name="Stewart A."/>
            <person name="Sgouros J.G."/>
            <person name="Peat N."/>
            <person name="Hayles J."/>
            <person name="Baker S.G."/>
            <person name="Basham D."/>
            <person name="Bowman S."/>
            <person name="Brooks K."/>
            <person name="Brown D."/>
            <person name="Brown S."/>
            <person name="Chillingworth T."/>
            <person name="Churcher C.M."/>
            <person name="Collins M."/>
            <person name="Connor R."/>
            <person name="Cronin A."/>
            <person name="Davis P."/>
            <person name="Feltwell T."/>
            <person name="Fraser A."/>
            <person name="Gentles S."/>
            <person name="Goble A."/>
            <person name="Hamlin N."/>
            <person name="Harris D.E."/>
            <person name="Hidalgo J."/>
            <person name="Hodgson G."/>
            <person name="Holroyd S."/>
            <person name="Hornsby T."/>
            <person name="Howarth S."/>
            <person name="Huckle E.J."/>
            <person name="Hunt S."/>
            <person name="Jagels K."/>
            <person name="James K.D."/>
            <person name="Jones L."/>
            <person name="Jones M."/>
            <person name="Leather S."/>
            <person name="McDonald S."/>
            <person name="McLean J."/>
            <person name="Mooney P."/>
            <person name="Moule S."/>
            <person name="Mungall K.L."/>
            <person name="Murphy L.D."/>
            <person name="Niblett D."/>
            <person name="Odell C."/>
            <person name="Oliver K."/>
            <person name="O'Neil S."/>
            <person name="Pearson D."/>
            <person name="Quail M.A."/>
            <person name="Rabbinowitsch E."/>
            <person name="Rutherford K.M."/>
            <person name="Rutter S."/>
            <person name="Saunders D."/>
            <person name="Seeger K."/>
            <person name="Sharp S."/>
            <person name="Skelton J."/>
            <person name="Simmonds M.N."/>
            <person name="Squares R."/>
            <person name="Squares S."/>
            <person name="Stevens K."/>
            <person name="Taylor K."/>
            <person name="Taylor R.G."/>
            <person name="Tivey A."/>
            <person name="Walsh S.V."/>
            <person name="Warren T."/>
            <person name="Whitehead S."/>
            <person name="Woodward J.R."/>
            <person name="Volckaert G."/>
            <person name="Aert R."/>
            <person name="Robben J."/>
            <person name="Grymonprez B."/>
            <person name="Weltjens I."/>
            <person name="Vanstreels E."/>
            <person name="Rieger M."/>
            <person name="Schaefer M."/>
            <person name="Mueller-Auer S."/>
            <person name="Gabel C."/>
            <person name="Fuchs M."/>
            <person name="Duesterhoeft A."/>
            <person name="Fritzc C."/>
            <person name="Holzer E."/>
            <person name="Moestl D."/>
            <person name="Hilbert H."/>
            <person name="Borzym K."/>
            <person name="Langer I."/>
            <person name="Beck A."/>
            <person name="Lehrach H."/>
            <person name="Reinhardt R."/>
            <person name="Pohl T.M."/>
            <person name="Eger P."/>
            <person name="Zimmermann W."/>
            <person name="Wedler H."/>
            <person name="Wambutt R."/>
            <person name="Purnelle B."/>
            <person name="Goffeau A."/>
            <person name="Cadieu E."/>
            <person name="Dreano S."/>
            <person name="Gloux S."/>
            <person name="Lelaure V."/>
            <person name="Mottier S."/>
            <person name="Galibert F."/>
            <person name="Aves S.J."/>
            <person name="Xiang Z."/>
            <person name="Hunt C."/>
            <person name="Moore K."/>
            <person name="Hurst S.M."/>
            <person name="Lucas M."/>
            <person name="Rochet M."/>
            <person name="Gaillardin C."/>
            <person name="Tallada V.A."/>
            <person name="Garzon A."/>
            <person name="Thode G."/>
            <person name="Daga R.R."/>
            <person name="Cruzado L."/>
            <person name="Jimenez J."/>
            <person name="Sanchez M."/>
            <person name="del Rey F."/>
            <person name="Benito J."/>
            <person name="Dominguez A."/>
            <person name="Revuelta J.L."/>
            <person name="Moreno S."/>
            <person name="Armstrong J."/>
            <person name="Forsburg S.L."/>
            <person name="Cerutti L."/>
            <person name="Lowe T."/>
            <person name="McCombie W.R."/>
            <person name="Paulsen I."/>
            <person name="Potashkin J."/>
            <person name="Shpakovski G.V."/>
            <person name="Ussery D."/>
            <person name="Barrell B.G."/>
            <person name="Nurse P."/>
        </authorList>
    </citation>
    <scope>NUCLEOTIDE SEQUENCE [LARGE SCALE GENOMIC DNA]</scope>
    <source>
        <strain>972 / ATCC 24843</strain>
    </source>
</reference>
<reference key="2">
    <citation type="journal article" date="2006" name="Nat. Biotechnol.">
        <title>ORFeome cloning and global analysis of protein localization in the fission yeast Schizosaccharomyces pombe.</title>
        <authorList>
            <person name="Matsuyama A."/>
            <person name="Arai R."/>
            <person name="Yashiroda Y."/>
            <person name="Shirai A."/>
            <person name="Kamata A."/>
            <person name="Sekido S."/>
            <person name="Kobayashi Y."/>
            <person name="Hashimoto A."/>
            <person name="Hamamoto M."/>
            <person name="Hiraoka Y."/>
            <person name="Horinouchi S."/>
            <person name="Yoshida M."/>
        </authorList>
    </citation>
    <scope>SUBCELLULAR LOCATION [LARGE SCALE ANALYSIS]</scope>
</reference>
<comment type="function">
    <text evidence="1">Component of the ribosome, a large ribonucleoprotein complex responsible for the synthesis of proteins in the cell. The small ribosomal subunit (SSU) binds messenger RNAs (mRNAs) and translates the encoded message by selecting cognate aminoacyl-transfer RNA (tRNA) molecules. The large subunit (LSU) contains the ribosomal catalytic site termed the peptidyl transferase center (PTC), which catalyzes the formation of peptide bonds, thereby polymerizing the amino acids delivered by tRNAs into a polypeptide chain. The nascent polypeptides leave the ribosome through a tunnel in the LSU and interact with protein factors that function in enzymatic processing, targeting, and the membrane insertion of nascent chains at the exit of the ribosomal tunnel.</text>
</comment>
<comment type="subunit">
    <text evidence="1">Component of the small ribosomal subunit (SSU). Mature yeast ribosomes consist of a small (40S) and a large (60S) subunit. The 40S small subunit contains 1 molecule of ribosomal RNA (18S rRNA) and at least 33 different proteins. The large 60S subunit contains 3 rRNA molecules (25S, 5.8S and 5S rRNA) and at least 46 different proteins.</text>
</comment>
<comment type="subcellular location">
    <subcellularLocation>
        <location evidence="3">Cytoplasm</location>
    </subcellularLocation>
</comment>
<comment type="miscellaneous">
    <text>There are 2 genes for eS8 in S.pombe.</text>
</comment>
<comment type="similarity">
    <text evidence="4">Belongs to the eukaryotic ribosomal protein eS8 family.</text>
</comment>
<proteinExistence type="inferred from homology"/>
<keyword id="KW-0963">Cytoplasm</keyword>
<keyword id="KW-1185">Reference proteome</keyword>
<keyword id="KW-0687">Ribonucleoprotein</keyword>
<keyword id="KW-0689">Ribosomal protein</keyword>
<name>RS8A_SCHPO</name>
<organism>
    <name type="scientific">Schizosaccharomyces pombe (strain 972 / ATCC 24843)</name>
    <name type="common">Fission yeast</name>
    <dbReference type="NCBI Taxonomy" id="284812"/>
    <lineage>
        <taxon>Eukaryota</taxon>
        <taxon>Fungi</taxon>
        <taxon>Dikarya</taxon>
        <taxon>Ascomycota</taxon>
        <taxon>Taphrinomycotina</taxon>
        <taxon>Schizosaccharomycetes</taxon>
        <taxon>Schizosaccharomycetales</taxon>
        <taxon>Schizosaccharomycetaceae</taxon>
        <taxon>Schizosaccharomyces</taxon>
    </lineage>
</organism>
<sequence length="200" mass="22593">MGITRDSRHKRSATGAKRAQYRKKRKFELGRQPSNTRIGPKRIHEVRVRGGNKKFRALRLDSGNFSWGSEGVSKKTRIIQVAYHPSNNELVRTNTLTKSAIVQIDAAPFRVWYETHYGILMGSKGKKATSTPNPKSKHVQRKHSARLGDSKVDSALETQFAAGRLYAVVSSRPGQSGRCDGYILEGEELHFYLRRMAPKK</sequence>
<dbReference type="EMBL" id="CU329670">
    <property type="protein sequence ID" value="CAB16376.1"/>
    <property type="molecule type" value="Genomic_DNA"/>
</dbReference>
<dbReference type="PIR" id="T38527">
    <property type="entry name" value="T38527"/>
</dbReference>
<dbReference type="RefSeq" id="NP_594519.1">
    <property type="nucleotide sequence ID" value="NM_001019948.2"/>
</dbReference>
<dbReference type="SMR" id="O14049"/>
<dbReference type="BioGRID" id="277993">
    <property type="interactions" value="32"/>
</dbReference>
<dbReference type="FunCoup" id="O14049">
    <property type="interactions" value="450"/>
</dbReference>
<dbReference type="STRING" id="284812.O14049"/>
<dbReference type="iPTMnet" id="O14049"/>
<dbReference type="PaxDb" id="4896-SPAC2C4.16c.1"/>
<dbReference type="EnsemblFungi" id="SPAC2C4.16c.1">
    <property type="protein sequence ID" value="SPAC2C4.16c.1:pep"/>
    <property type="gene ID" value="SPAC2C4.16c"/>
</dbReference>
<dbReference type="GeneID" id="2541491"/>
<dbReference type="KEGG" id="spo:2541491"/>
<dbReference type="PomBase" id="SPAC2C4.16c">
    <property type="gene designation" value="rps801"/>
</dbReference>
<dbReference type="VEuPathDB" id="FungiDB:SPAC2C4.16c"/>
<dbReference type="eggNOG" id="KOG3283">
    <property type="taxonomic scope" value="Eukaryota"/>
</dbReference>
<dbReference type="HOGENOM" id="CLU_080597_1_1_1"/>
<dbReference type="InParanoid" id="O14049"/>
<dbReference type="OMA" id="SNKKYRA"/>
<dbReference type="PhylomeDB" id="O14049"/>
<dbReference type="PRO" id="PR:O14049"/>
<dbReference type="Proteomes" id="UP000002485">
    <property type="component" value="Chromosome I"/>
</dbReference>
<dbReference type="GO" id="GO:0005829">
    <property type="term" value="C:cytosol"/>
    <property type="evidence" value="ECO:0007005"/>
    <property type="project" value="PomBase"/>
</dbReference>
<dbReference type="GO" id="GO:0022627">
    <property type="term" value="C:cytosolic small ribosomal subunit"/>
    <property type="evidence" value="ECO:0000318"/>
    <property type="project" value="GO_Central"/>
</dbReference>
<dbReference type="GO" id="GO:0003735">
    <property type="term" value="F:structural constituent of ribosome"/>
    <property type="evidence" value="ECO:0000318"/>
    <property type="project" value="GO_Central"/>
</dbReference>
<dbReference type="GO" id="GO:0002182">
    <property type="term" value="P:cytoplasmic translational elongation"/>
    <property type="evidence" value="ECO:0000303"/>
    <property type="project" value="PomBase"/>
</dbReference>
<dbReference type="GO" id="GO:0000462">
    <property type="term" value="P:maturation of SSU-rRNA from tricistronic rRNA transcript (SSU-rRNA, 5.8S rRNA, LSU-rRNA)"/>
    <property type="evidence" value="ECO:0000318"/>
    <property type="project" value="GO_Central"/>
</dbReference>
<dbReference type="CDD" id="cd11380">
    <property type="entry name" value="Ribosomal_S8e_like"/>
    <property type="match status" value="1"/>
</dbReference>
<dbReference type="FunFam" id="1.10.168.20:FF:000001">
    <property type="entry name" value="40S ribosomal protein S8"/>
    <property type="match status" value="1"/>
</dbReference>
<dbReference type="Gene3D" id="3.10.290.70">
    <property type="match status" value="1"/>
</dbReference>
<dbReference type="Gene3D" id="1.10.168.20">
    <property type="entry name" value="Ribosomal protein S8e, subdomain"/>
    <property type="match status" value="1"/>
</dbReference>
<dbReference type="InterPro" id="IPR001047">
    <property type="entry name" value="Ribosomal_eS8"/>
</dbReference>
<dbReference type="InterPro" id="IPR018283">
    <property type="entry name" value="Ribosomal_eS8_CS"/>
</dbReference>
<dbReference type="InterPro" id="IPR042563">
    <property type="entry name" value="Ribosomal_protein_eS8_euk"/>
</dbReference>
<dbReference type="InterPro" id="IPR022309">
    <property type="entry name" value="Ribosomal_Se8/biogenesis_NSA2"/>
</dbReference>
<dbReference type="NCBIfam" id="TIGR00307">
    <property type="entry name" value="eS8"/>
    <property type="match status" value="1"/>
</dbReference>
<dbReference type="PANTHER" id="PTHR10394">
    <property type="entry name" value="40S RIBOSOMAL PROTEIN S8"/>
    <property type="match status" value="1"/>
</dbReference>
<dbReference type="Pfam" id="PF01201">
    <property type="entry name" value="Ribosomal_S8e"/>
    <property type="match status" value="1"/>
</dbReference>
<dbReference type="PROSITE" id="PS01193">
    <property type="entry name" value="RIBOSOMAL_S8E"/>
    <property type="match status" value="1"/>
</dbReference>
<evidence type="ECO:0000250" key="1">
    <source>
        <dbReference type="UniProtKB" id="P0CX39"/>
    </source>
</evidence>
<evidence type="ECO:0000256" key="2">
    <source>
        <dbReference type="SAM" id="MobiDB-lite"/>
    </source>
</evidence>
<evidence type="ECO:0000269" key="3">
    <source>
    </source>
</evidence>
<evidence type="ECO:0000305" key="4"/>
<feature type="chain" id="PRO_0000122256" description="Small ribosomal subunit protein eS8A">
    <location>
        <begin position="1"/>
        <end position="200"/>
    </location>
</feature>
<feature type="region of interest" description="Disordered" evidence="2">
    <location>
        <begin position="1"/>
        <end position="40"/>
    </location>
</feature>
<feature type="region of interest" description="Disordered" evidence="2">
    <location>
        <begin position="123"/>
        <end position="145"/>
    </location>
</feature>
<feature type="compositionally biased region" description="Basic residues" evidence="2">
    <location>
        <begin position="135"/>
        <end position="145"/>
    </location>
</feature>
<protein>
    <recommendedName>
        <fullName evidence="4">Small ribosomal subunit protein eS8A</fullName>
    </recommendedName>
    <alternativeName>
        <fullName>40S ribosomal protein S8-A</fullName>
    </alternativeName>
</protein>